<evidence type="ECO:0000250" key="1"/>
<evidence type="ECO:0000250" key="2">
    <source>
        <dbReference type="UniProtKB" id="P04899"/>
    </source>
</evidence>
<evidence type="ECO:0000255" key="3">
    <source>
        <dbReference type="PROSITE-ProRule" id="PRU01230"/>
    </source>
</evidence>
<evidence type="ECO:0000269" key="4">
    <source>
    </source>
</evidence>
<evidence type="ECO:0000269" key="5">
    <source>
    </source>
</evidence>
<evidence type="ECO:0000269" key="6">
    <source>
    </source>
</evidence>
<evidence type="ECO:0000269" key="7">
    <source>
    </source>
</evidence>
<evidence type="ECO:0000269" key="8">
    <source>
    </source>
</evidence>
<evidence type="ECO:0000305" key="9"/>
<name>GNAI2_RAT</name>
<gene>
    <name type="primary">Gnai2</name>
    <name type="synonym">Gnai-2</name>
</gene>
<keyword id="KW-0131">Cell cycle</keyword>
<keyword id="KW-0132">Cell division</keyword>
<keyword id="KW-1003">Cell membrane</keyword>
<keyword id="KW-0963">Cytoplasm</keyword>
<keyword id="KW-0206">Cytoskeleton</keyword>
<keyword id="KW-0903">Direct protein sequencing</keyword>
<keyword id="KW-0342">GTP-binding</keyword>
<keyword id="KW-0449">Lipoprotein</keyword>
<keyword id="KW-0460">Magnesium</keyword>
<keyword id="KW-0472">Membrane</keyword>
<keyword id="KW-0479">Metal-binding</keyword>
<keyword id="KW-0519">Myristate</keyword>
<keyword id="KW-0547">Nucleotide-binding</keyword>
<keyword id="KW-0564">Palmitate</keyword>
<keyword id="KW-1185">Reference proteome</keyword>
<keyword id="KW-0807">Transducer</keyword>
<organism>
    <name type="scientific">Rattus norvegicus</name>
    <name type="common">Rat</name>
    <dbReference type="NCBI Taxonomy" id="10116"/>
    <lineage>
        <taxon>Eukaryota</taxon>
        <taxon>Metazoa</taxon>
        <taxon>Chordata</taxon>
        <taxon>Craniata</taxon>
        <taxon>Vertebrata</taxon>
        <taxon>Euteleostomi</taxon>
        <taxon>Mammalia</taxon>
        <taxon>Eutheria</taxon>
        <taxon>Euarchontoglires</taxon>
        <taxon>Glires</taxon>
        <taxon>Rodentia</taxon>
        <taxon>Myomorpha</taxon>
        <taxon>Muroidea</taxon>
        <taxon>Muridae</taxon>
        <taxon>Murinae</taxon>
        <taxon>Rattus</taxon>
    </lineage>
</organism>
<feature type="initiator methionine" description="Removed" evidence="2">
    <location>
        <position position="1"/>
    </location>
</feature>
<feature type="chain" id="PRO_0000203682" description="Guanine nucleotide-binding protein G(i) subunit alpha-2">
    <location>
        <begin position="2"/>
        <end position="355"/>
    </location>
</feature>
<feature type="domain" description="G-alpha" evidence="3">
    <location>
        <begin position="32"/>
        <end position="355"/>
    </location>
</feature>
<feature type="region of interest" description="G1 motif" evidence="3">
    <location>
        <begin position="35"/>
        <end position="48"/>
    </location>
</feature>
<feature type="region of interest" description="G2 motif" evidence="3">
    <location>
        <begin position="174"/>
        <end position="182"/>
    </location>
</feature>
<feature type="region of interest" description="G3 motif" evidence="3">
    <location>
        <begin position="197"/>
        <end position="206"/>
    </location>
</feature>
<feature type="region of interest" description="G4 motif" evidence="3">
    <location>
        <begin position="266"/>
        <end position="273"/>
    </location>
</feature>
<feature type="region of interest" description="G5 motif" evidence="3">
    <location>
        <begin position="325"/>
        <end position="330"/>
    </location>
</feature>
<feature type="binding site" evidence="1">
    <location>
        <begin position="40"/>
        <end position="47"/>
    </location>
    <ligand>
        <name>GTP</name>
        <dbReference type="ChEBI" id="CHEBI:37565"/>
    </ligand>
</feature>
<feature type="binding site" evidence="1">
    <location>
        <position position="47"/>
    </location>
    <ligand>
        <name>Mg(2+)</name>
        <dbReference type="ChEBI" id="CHEBI:18420"/>
    </ligand>
</feature>
<feature type="binding site" evidence="1">
    <location>
        <begin position="176"/>
        <end position="182"/>
    </location>
    <ligand>
        <name>GTP</name>
        <dbReference type="ChEBI" id="CHEBI:37565"/>
    </ligand>
</feature>
<feature type="binding site" evidence="1">
    <location>
        <position position="182"/>
    </location>
    <ligand>
        <name>Mg(2+)</name>
        <dbReference type="ChEBI" id="CHEBI:18420"/>
    </ligand>
</feature>
<feature type="binding site" evidence="1">
    <location>
        <begin position="201"/>
        <end position="205"/>
    </location>
    <ligand>
        <name>GTP</name>
        <dbReference type="ChEBI" id="CHEBI:37565"/>
    </ligand>
</feature>
<feature type="binding site" evidence="1">
    <location>
        <begin position="270"/>
        <end position="273"/>
    </location>
    <ligand>
        <name>GTP</name>
        <dbReference type="ChEBI" id="CHEBI:37565"/>
    </ligand>
</feature>
<feature type="binding site" evidence="1">
    <location>
        <position position="327"/>
    </location>
    <ligand>
        <name>GTP</name>
        <dbReference type="ChEBI" id="CHEBI:37565"/>
    </ligand>
</feature>
<feature type="lipid moiety-binding region" description="N-myristoyl glycine" evidence="2">
    <location>
        <position position="2"/>
    </location>
</feature>
<feature type="lipid moiety-binding region" description="S-palmitoyl cysteine" evidence="1">
    <location>
        <position position="3"/>
    </location>
</feature>
<feature type="sequence variant" description="In tryptic peptides.">
    <original>SD</original>
    <variation>PN</variation>
    <location>
        <begin position="166"/>
        <end position="167"/>
    </location>
</feature>
<feature type="mutagenesis site" description="Increases sensitivity to RGS14 GTPase activity; when associated with I-85; R-86; R-90; K-92; G-96; A-98; A-99; A-111; G-112; T-121 and A-122. Does not increase sensitivity to RGS14 GTPase activity; when associated with I-85 and A-111." evidence="6">
    <original>M</original>
    <variation>I</variation>
    <location>
        <position position="82"/>
    </location>
</feature>
<feature type="mutagenesis site" description="Increases sensitivity to RGS14 GTPase activity; when associated with I-82; R-86; R-90; K-92; G-96; A-98; A-99; A-111; G-112; T-121 and A-122. Does not increase sensitivity to RGS14 GTPase activity; when associated with I-82 and A-111." evidence="6">
    <original>V</original>
    <variation>I</variation>
    <location>
        <position position="85"/>
    </location>
</feature>
<feature type="mutagenesis site" description="Increases sensitivity to RGS14 GTPase activity; when associated with I-82; I-85; R-90; K-92; G-96; A-98; A-99; A-111; G-112; T-121 and A-122." evidence="6">
    <original>K</original>
    <variation>R</variation>
    <location>
        <position position="86"/>
    </location>
</feature>
<feature type="mutagenesis site" description="Increases sensitivity to RGS14 GTPase activity; when associated with I-82; I-85; R-86; K-92; G-96; A-98; A-99; A-111; G-112; T-121 and A-122." evidence="6">
    <original>N</original>
    <variation>R</variation>
    <location>
        <position position="90"/>
    </location>
</feature>
<feature type="mutagenesis site" description="Increases sensitivity to RGS14 GTPase activity; when associated with I-82; I-85; R-86; R-90; G-96; A-98; A-99; A-111; G-112; T-121 and A-122." evidence="6">
    <original>Q</original>
    <variation>K</variation>
    <location>
        <position position="92"/>
    </location>
</feature>
<feature type="mutagenesis site" description="Increases sensitivity to RGS14 GTPase activity; when associated with I-82; I-85; R-86; R-90; K-92; A-98; A-99; A-111; G-112; T-121 and A-122." evidence="6">
    <original>A</original>
    <variation>G</variation>
    <location>
        <position position="96"/>
    </location>
</feature>
<feature type="mutagenesis site" description="Increases sensitivity to RGS14 GTPase activity; when associated with I-82; I-85; R-86; R-90; K-92; G-96; A-99; A-111; G-112; T-121 and A-122." evidence="6">
    <original>P</original>
    <variation>A</variation>
    <location>
        <position position="98"/>
    </location>
</feature>
<feature type="mutagenesis site" description="Increases sensitivity to RGS14 GTPase activity; when associated with I-82; I-85; R-86; R-90; K-92; G-96; A-98; A-111; G-112; T-121 and A-122." evidence="6">
    <original>Q</original>
    <variation>A</variation>
    <location>
        <position position="99"/>
    </location>
</feature>
<feature type="mutagenesis site" description="Increases sensitivity to RGS14 GTPase activity; when associated with I-82; I-85; R-86; R-90; K-92; G-96; A-98; A-99; G-112; T-121 and A-122. Does not increase sensitivity to RGS14 GTPase activity; when associated with G-112; T-121 and A-122. Does not increase sensitivity to RGS14 GTPase activity; when associated with I-82 and A-85." evidence="6">
    <original>S</original>
    <variation>A</variation>
    <location>
        <position position="111"/>
    </location>
</feature>
<feature type="mutagenesis site" description="Increases sensitivity to RGS14 GTPase activity; when associated with I-82; I-85; R-86; R-90; K-92; G-96; A-98; A-99; A-111; T-121 and A-122. Does not increase sensitivity to RGS14 GTPase activity; when associated with G-111; T-121 and A-122." evidence="6">
    <original>C</original>
    <variation>G</variation>
    <location>
        <position position="112"/>
    </location>
</feature>
<feature type="mutagenesis site" description="Increases sensitivity to RGS14 GTPase activity; when associated with I-82; I-85; R-86; R-90; K-92; G-96; A-98; A-99; A-111; G-112; T-121 and A-122. Does not increase sensitivity to RGS14 GTPase activity; when associated with G-111; G-112; T-121 and A-122.">
    <location>
        <position position="117"/>
    </location>
</feature>
<feature type="mutagenesis site" description="Increases sensitivity to RGS14 GTPase activity; when associated with I-82; I-85; R-86; R-90; K-92; G-96; A-98; A-99; A-111; G-112 and A-122. Does not increase sensitivity to RGS14 GTPase activity; when associated with G-111; G-112 and A-122." evidence="6">
    <original>P</original>
    <variation>T</variation>
    <location>
        <position position="121"/>
    </location>
</feature>
<feature type="mutagenesis site" description="Increases sensitivity to RGS14 GTPase activity; when associated with I-82; I-85; R-86; R-90; K-92; G-96; A-98; A-99; A-111; G-112 and T-121. Does not increase sensitivity to RGS14 GTPase activity; when associated with G-111; G-112 and T-121." evidence="6">
    <original>E</original>
    <variation>A</variation>
    <location>
        <position position="122"/>
    </location>
</feature>
<sequence length="355" mass="40499">MGCTVSAEDKAAAERSKMIDKNLREDGEKAAREVKLLLLGAGESGKSTIVKQMKIIHEDGYSEEECRQYRAVVYSNTIQSIMAIVKAMGNLQIDFADPQRADDARQLFALSCAAEEQGMLPEDLSGVIRRLWADHGVQACFGRSREYQLNDSAAYYLNDLERIAQSDYIPTQQDVLRTRVKTTGIVETHFTFKDLHFKMFDVGGQRSERKKWIHCFEGVTAIIFCVALSAYDLVLAEDEEMNRMHESMKLFDSICNNKWFTDTSIILFLNKKDLFEEKITQSPLTICFPEYTGANKYDEAASYIQSKFEDLNKRKDTKEIYTHFTCATDTKNVQFVFDAVTDVIIKNNLKDCGLF</sequence>
<dbReference type="EMBL" id="M12672">
    <property type="protein sequence ID" value="AAA41260.1"/>
    <property type="molecule type" value="mRNA"/>
</dbReference>
<dbReference type="EMBL" id="M17528">
    <property type="protein sequence ID" value="AAA40824.1"/>
    <property type="molecule type" value="mRNA"/>
</dbReference>
<dbReference type="EMBL" id="BC078806">
    <property type="protein sequence ID" value="AAH78806.1"/>
    <property type="molecule type" value="mRNA"/>
</dbReference>
<dbReference type="PIR" id="D27423">
    <property type="entry name" value="RGRTI2"/>
</dbReference>
<dbReference type="RefSeq" id="NP_112297.1">
    <property type="nucleotide sequence ID" value="NM_031035.3"/>
</dbReference>
<dbReference type="RefSeq" id="XP_006243920.1">
    <property type="nucleotide sequence ID" value="XM_006243858.2"/>
</dbReference>
<dbReference type="RefSeq" id="XP_063122275.1">
    <property type="nucleotide sequence ID" value="XM_063266205.1"/>
</dbReference>
<dbReference type="SMR" id="P04897"/>
<dbReference type="BioGRID" id="249564">
    <property type="interactions" value="4"/>
</dbReference>
<dbReference type="CORUM" id="P04897"/>
<dbReference type="DIP" id="DIP-607N"/>
<dbReference type="FunCoup" id="P04897">
    <property type="interactions" value="3607"/>
</dbReference>
<dbReference type="IntAct" id="P04897">
    <property type="interactions" value="3"/>
</dbReference>
<dbReference type="MINT" id="P04897"/>
<dbReference type="STRING" id="10116.ENSRNOP00000022550"/>
<dbReference type="ChEMBL" id="CHEMBL4524034"/>
<dbReference type="iPTMnet" id="P04897"/>
<dbReference type="PhosphoSitePlus" id="P04897"/>
<dbReference type="SwissPalm" id="P04897"/>
<dbReference type="jPOST" id="P04897"/>
<dbReference type="PaxDb" id="10116-ENSRNOP00000022550"/>
<dbReference type="Ensembl" id="ENSRNOT00000022550.7">
    <property type="protein sequence ID" value="ENSRNOP00000022550.4"/>
    <property type="gene ID" value="ENSRNOG00000016592.7"/>
</dbReference>
<dbReference type="GeneID" id="81664"/>
<dbReference type="KEGG" id="rno:81664"/>
<dbReference type="UCSC" id="RGD:620243">
    <property type="organism name" value="rat"/>
</dbReference>
<dbReference type="AGR" id="RGD:620243"/>
<dbReference type="CTD" id="2771"/>
<dbReference type="RGD" id="620243">
    <property type="gene designation" value="Gnai2"/>
</dbReference>
<dbReference type="eggNOG" id="KOG0082">
    <property type="taxonomic scope" value="Eukaryota"/>
</dbReference>
<dbReference type="GeneTree" id="ENSGT00940000155125"/>
<dbReference type="HOGENOM" id="CLU_014184_6_0_1"/>
<dbReference type="InParanoid" id="P04897"/>
<dbReference type="OMA" id="YMQLQFE"/>
<dbReference type="OrthoDB" id="5817230at2759"/>
<dbReference type="PhylomeDB" id="P04897"/>
<dbReference type="TreeFam" id="TF300673"/>
<dbReference type="Reactome" id="R-RNO-170670">
    <property type="pathway name" value="Adenylate cyclase inhibitory pathway"/>
</dbReference>
<dbReference type="Reactome" id="R-RNO-392170">
    <property type="pathway name" value="ADP signalling through P2Y purinoceptor 12"/>
</dbReference>
<dbReference type="Reactome" id="R-RNO-400042">
    <property type="pathway name" value="Adrenaline,noradrenaline inhibits insulin secretion"/>
</dbReference>
<dbReference type="Reactome" id="R-RNO-418594">
    <property type="pathway name" value="G alpha (i) signalling events"/>
</dbReference>
<dbReference type="Reactome" id="R-RNO-9009391">
    <property type="pathway name" value="Extra-nuclear estrogen signaling"/>
</dbReference>
<dbReference type="SABIO-RK" id="P04897"/>
<dbReference type="PRO" id="PR:P04897"/>
<dbReference type="Proteomes" id="UP000002494">
    <property type="component" value="Chromosome 8"/>
</dbReference>
<dbReference type="Bgee" id="ENSRNOG00000016592">
    <property type="expression patterns" value="Expressed in spleen and 19 other cell types or tissues"/>
</dbReference>
<dbReference type="ExpressionAtlas" id="P04897">
    <property type="expression patterns" value="baseline and differential"/>
</dbReference>
<dbReference type="GO" id="GO:0044297">
    <property type="term" value="C:cell body"/>
    <property type="evidence" value="ECO:0000266"/>
    <property type="project" value="RGD"/>
</dbReference>
<dbReference type="GO" id="GO:0005813">
    <property type="term" value="C:centrosome"/>
    <property type="evidence" value="ECO:0000250"/>
    <property type="project" value="UniProtKB"/>
</dbReference>
<dbReference type="GO" id="GO:0036064">
    <property type="term" value="C:ciliary basal body"/>
    <property type="evidence" value="ECO:0007669"/>
    <property type="project" value="Ensembl"/>
</dbReference>
<dbReference type="GO" id="GO:0005737">
    <property type="term" value="C:cytoplasm"/>
    <property type="evidence" value="ECO:0000250"/>
    <property type="project" value="UniProtKB"/>
</dbReference>
<dbReference type="GO" id="GO:0005829">
    <property type="term" value="C:cytosol"/>
    <property type="evidence" value="ECO:0007669"/>
    <property type="project" value="Ensembl"/>
</dbReference>
<dbReference type="GO" id="GO:0030425">
    <property type="term" value="C:dendrite"/>
    <property type="evidence" value="ECO:0000266"/>
    <property type="project" value="RGD"/>
</dbReference>
<dbReference type="GO" id="GO:0070382">
    <property type="term" value="C:exocytic vesicle"/>
    <property type="evidence" value="ECO:0000266"/>
    <property type="project" value="RGD"/>
</dbReference>
<dbReference type="GO" id="GO:0005834">
    <property type="term" value="C:heterotrimeric G-protein complex"/>
    <property type="evidence" value="ECO:0000318"/>
    <property type="project" value="GO_Central"/>
</dbReference>
<dbReference type="GO" id="GO:0098686">
    <property type="term" value="C:hippocampal mossy fiber to CA3 synapse"/>
    <property type="evidence" value="ECO:0000266"/>
    <property type="project" value="RGD"/>
</dbReference>
<dbReference type="GO" id="GO:0030496">
    <property type="term" value="C:midbody"/>
    <property type="evidence" value="ECO:0000250"/>
    <property type="project" value="UniProtKB"/>
</dbReference>
<dbReference type="GO" id="GO:0098992">
    <property type="term" value="C:neuronal dense core vesicle"/>
    <property type="evidence" value="ECO:0000266"/>
    <property type="project" value="RGD"/>
</dbReference>
<dbReference type="GO" id="GO:0005654">
    <property type="term" value="C:nucleoplasm"/>
    <property type="evidence" value="ECO:0007669"/>
    <property type="project" value="Ensembl"/>
</dbReference>
<dbReference type="GO" id="GO:0005886">
    <property type="term" value="C:plasma membrane"/>
    <property type="evidence" value="ECO:0000314"/>
    <property type="project" value="UniProtKB"/>
</dbReference>
<dbReference type="GO" id="GO:0001664">
    <property type="term" value="F:G protein-coupled receptor binding"/>
    <property type="evidence" value="ECO:0000318"/>
    <property type="project" value="GO_Central"/>
</dbReference>
<dbReference type="GO" id="GO:0031683">
    <property type="term" value="F:G-protein beta/gamma-subunit complex binding"/>
    <property type="evidence" value="ECO:0000318"/>
    <property type="project" value="GO_Central"/>
</dbReference>
<dbReference type="GO" id="GO:0005525">
    <property type="term" value="F:GTP binding"/>
    <property type="evidence" value="ECO:0007669"/>
    <property type="project" value="UniProtKB-KW"/>
</dbReference>
<dbReference type="GO" id="GO:0003924">
    <property type="term" value="F:GTPase activity"/>
    <property type="evidence" value="ECO:0000318"/>
    <property type="project" value="GO_Central"/>
</dbReference>
<dbReference type="GO" id="GO:0046872">
    <property type="term" value="F:metal ion binding"/>
    <property type="evidence" value="ECO:0007669"/>
    <property type="project" value="UniProtKB-KW"/>
</dbReference>
<dbReference type="GO" id="GO:0007189">
    <property type="term" value="P:adenylate cyclase-activating G protein-coupled receptor signaling pathway"/>
    <property type="evidence" value="ECO:0000315"/>
    <property type="project" value="RGD"/>
</dbReference>
<dbReference type="GO" id="GO:0007193">
    <property type="term" value="P:adenylate cyclase-inhibiting G protein-coupled receptor signaling pathway"/>
    <property type="evidence" value="ECO:0000266"/>
    <property type="project" value="RGD"/>
</dbReference>
<dbReference type="GO" id="GO:0051301">
    <property type="term" value="P:cell division"/>
    <property type="evidence" value="ECO:0000250"/>
    <property type="project" value="UniProtKB"/>
</dbReference>
<dbReference type="GO" id="GO:0008283">
    <property type="term" value="P:cell population proliferation"/>
    <property type="evidence" value="ECO:0000266"/>
    <property type="project" value="RGD"/>
</dbReference>
<dbReference type="GO" id="GO:0007213">
    <property type="term" value="P:G protein-coupled acetylcholine receptor signaling pathway"/>
    <property type="evidence" value="ECO:0000266"/>
    <property type="project" value="RGD"/>
</dbReference>
<dbReference type="GO" id="GO:0001973">
    <property type="term" value="P:G protein-coupled adenosine receptor signaling pathway"/>
    <property type="evidence" value="ECO:0000314"/>
    <property type="project" value="RGD"/>
</dbReference>
<dbReference type="GO" id="GO:0007186">
    <property type="term" value="P:G protein-coupled receptor signaling pathway"/>
    <property type="evidence" value="ECO:0000314"/>
    <property type="project" value="RGD"/>
</dbReference>
<dbReference type="GO" id="GO:0007214">
    <property type="term" value="P:gamma-aminobutyric acid signaling pathway"/>
    <property type="evidence" value="ECO:0000314"/>
    <property type="project" value="RGD"/>
</dbReference>
<dbReference type="GO" id="GO:0050804">
    <property type="term" value="P:modulation of chemical synaptic transmission"/>
    <property type="evidence" value="ECO:0000266"/>
    <property type="project" value="RGD"/>
</dbReference>
<dbReference type="GO" id="GO:0071878">
    <property type="term" value="P:negative regulation of adenylate cyclase-activating adrenergic receptor signaling pathway"/>
    <property type="evidence" value="ECO:0000314"/>
    <property type="project" value="RGD"/>
</dbReference>
<dbReference type="GO" id="GO:2001234">
    <property type="term" value="P:negative regulation of apoptotic signaling pathway"/>
    <property type="evidence" value="ECO:0000315"/>
    <property type="project" value="RGD"/>
</dbReference>
<dbReference type="GO" id="GO:0045955">
    <property type="term" value="P:negative regulation of calcium ion-dependent exocytosis"/>
    <property type="evidence" value="ECO:0000315"/>
    <property type="project" value="RGD"/>
</dbReference>
<dbReference type="GO" id="GO:0050805">
    <property type="term" value="P:negative regulation of synaptic transmission"/>
    <property type="evidence" value="ECO:0000314"/>
    <property type="project" value="RGD"/>
</dbReference>
<dbReference type="GO" id="GO:0030335">
    <property type="term" value="P:positive regulation of cell migration"/>
    <property type="evidence" value="ECO:0000315"/>
    <property type="project" value="RGD"/>
</dbReference>
<dbReference type="GO" id="GO:0008284">
    <property type="term" value="P:positive regulation of cell population proliferation"/>
    <property type="evidence" value="ECO:0000315"/>
    <property type="project" value="RGD"/>
</dbReference>
<dbReference type="GO" id="GO:0070374">
    <property type="term" value="P:positive regulation of ERK1 and ERK2 cascade"/>
    <property type="evidence" value="ECO:0000315"/>
    <property type="project" value="RGD"/>
</dbReference>
<dbReference type="GO" id="GO:2000179">
    <property type="term" value="P:positive regulation of neural precursor cell proliferation"/>
    <property type="evidence" value="ECO:0000315"/>
    <property type="project" value="RGD"/>
</dbReference>
<dbReference type="GO" id="GO:0032930">
    <property type="term" value="P:positive regulation of superoxide anion generation"/>
    <property type="evidence" value="ECO:0000315"/>
    <property type="project" value="RGD"/>
</dbReference>
<dbReference type="GO" id="GO:0035810">
    <property type="term" value="P:positive regulation of urine volume"/>
    <property type="evidence" value="ECO:0000315"/>
    <property type="project" value="RGD"/>
</dbReference>
<dbReference type="GO" id="GO:1904707">
    <property type="term" value="P:positive regulation of vascular associated smooth muscle cell proliferation"/>
    <property type="evidence" value="ECO:0000315"/>
    <property type="project" value="RGD"/>
</dbReference>
<dbReference type="GO" id="GO:0051924">
    <property type="term" value="P:regulation of calcium ion transport"/>
    <property type="evidence" value="ECO:0000314"/>
    <property type="project" value="RGD"/>
</dbReference>
<dbReference type="CDD" id="cd00066">
    <property type="entry name" value="G-alpha"/>
    <property type="match status" value="1"/>
</dbReference>
<dbReference type="FunFam" id="1.10.400.10:FF:000001">
    <property type="entry name" value="Guanine nucleotide-binding protein G(I) subunit alpha"/>
    <property type="match status" value="1"/>
</dbReference>
<dbReference type="FunFam" id="3.40.50.300:FF:002487">
    <property type="entry name" value="Guanine nucleotide-binding protein G(i) subunit alpha-1"/>
    <property type="match status" value="1"/>
</dbReference>
<dbReference type="FunFam" id="3.40.50.300:FF:003559">
    <property type="entry name" value="Guanine nucleotide-binding protein G(i) subunit alpha-1"/>
    <property type="match status" value="1"/>
</dbReference>
<dbReference type="Gene3D" id="1.10.400.10">
    <property type="entry name" value="GI Alpha 1, domain 2-like"/>
    <property type="match status" value="1"/>
</dbReference>
<dbReference type="Gene3D" id="3.40.50.300">
    <property type="entry name" value="P-loop containing nucleotide triphosphate hydrolases"/>
    <property type="match status" value="1"/>
</dbReference>
<dbReference type="InterPro" id="IPR001408">
    <property type="entry name" value="Gprotein_alpha_I"/>
</dbReference>
<dbReference type="InterPro" id="IPR001019">
    <property type="entry name" value="Gprotein_alpha_su"/>
</dbReference>
<dbReference type="InterPro" id="IPR011025">
    <property type="entry name" value="GproteinA_insert"/>
</dbReference>
<dbReference type="InterPro" id="IPR027417">
    <property type="entry name" value="P-loop_NTPase"/>
</dbReference>
<dbReference type="PANTHER" id="PTHR10218">
    <property type="entry name" value="GTP-BINDING PROTEIN ALPHA SUBUNIT"/>
    <property type="match status" value="1"/>
</dbReference>
<dbReference type="PANTHER" id="PTHR10218:SF73">
    <property type="entry name" value="GUANINE NUCLEOTIDE-BINDING PROTEIN G(I) SUBUNIT ALPHA-2"/>
    <property type="match status" value="1"/>
</dbReference>
<dbReference type="Pfam" id="PF00503">
    <property type="entry name" value="G-alpha"/>
    <property type="match status" value="1"/>
</dbReference>
<dbReference type="PRINTS" id="PR00318">
    <property type="entry name" value="GPROTEINA"/>
</dbReference>
<dbReference type="PRINTS" id="PR00441">
    <property type="entry name" value="GPROTEINAI"/>
</dbReference>
<dbReference type="SMART" id="SM00275">
    <property type="entry name" value="G_alpha"/>
    <property type="match status" value="1"/>
</dbReference>
<dbReference type="SUPFAM" id="SSF52540">
    <property type="entry name" value="P-loop containing nucleoside triphosphate hydrolases"/>
    <property type="match status" value="1"/>
</dbReference>
<dbReference type="SUPFAM" id="SSF47895">
    <property type="entry name" value="Transducin (alpha subunit), insertion domain"/>
    <property type="match status" value="1"/>
</dbReference>
<dbReference type="PROSITE" id="PS51882">
    <property type="entry name" value="G_ALPHA"/>
    <property type="match status" value="1"/>
</dbReference>
<proteinExistence type="evidence at protein level"/>
<protein>
    <recommendedName>
        <fullName>Guanine nucleotide-binding protein G(i) subunit alpha-2</fullName>
    </recommendedName>
    <alternativeName>
        <fullName>Adenylate cyclase-inhibiting G alpha protein</fullName>
    </alternativeName>
</protein>
<accession>P04897</accession>
<comment type="function">
    <text>Guanine nucleotide-binding proteins (G proteins) are involved as modulators or transducers in various transmembrane signaling systems. The G(i) proteins are involved in hormonal regulation of adenylate cyclase: they inhibit the cyclase in response to beta-adrenergic stimuli. May play a role in cell division.</text>
</comment>
<comment type="subunit">
    <text evidence="2 4 5 7 8">G proteins are composed of 3 units; alpha, beta and gamma. The alpha chain contains the guanine nucleotide binding site. In this context, interacts with GNB2 (By similarity). Interacts with UNC5B (By similarity). Interacts with GPSM1 (PubMed:11121039). Interacts with RGS12 and RGS14 (PubMed:11387333). Interacts (inactive GDP-bound form) with NUCB1 (via GBA motif); the interaction leads to activation of GNAI3 (PubMed:21653697). Interacts (inactive GDP-bound form) with CCDC88C/DAPLE (via GBA motif) (By similarity). Interacts (inactive GDP-bound form) with CCDC8A/GIV (via GBA motif) (PubMed:19211784).</text>
</comment>
<comment type="subcellular location">
    <subcellularLocation>
        <location evidence="1">Cytoplasm</location>
    </subcellularLocation>
    <subcellularLocation>
        <location>Cell membrane</location>
    </subcellularLocation>
    <subcellularLocation>
        <location>Cytoplasm</location>
        <location>Cytoskeleton</location>
        <location>Microtubule organizing center</location>
        <location>Centrosome</location>
    </subcellularLocation>
    <subcellularLocation>
        <location evidence="2">Membrane</location>
        <topology evidence="2">Lipid-anchor</topology>
    </subcellularLocation>
    <text evidence="1">Localizes in the centrosomes of interphase and mitotic cells. Detected at the cleavage furrow and/or the midbody (By similarity).</text>
</comment>
<comment type="similarity">
    <text evidence="9">Belongs to the G-alpha family. G(i/o/t/z) subfamily.</text>
</comment>
<reference key="1">
    <citation type="journal article" date="1986" name="Proc. Natl. Acad. Sci. U.S.A.">
        <title>Molecular cloning and sequence determination of cDNAs for alpha subunits of the guanine nucleotide-binding proteins Gs, Gi, and Go from rat brain.</title>
        <authorList>
            <person name="Itoh H."/>
            <person name="Kozasa T."/>
            <person name="Nagata S."/>
            <person name="Nakamura S."/>
            <person name="Katada T."/>
            <person name="Ui M."/>
            <person name="Iwai S."/>
            <person name="Ohtsuka E."/>
            <person name="Kawasaki H."/>
            <person name="Suzuki K."/>
            <person name="Kaziro Y."/>
        </authorList>
    </citation>
    <scope>NUCLEOTIDE SEQUENCE [MRNA]</scope>
</reference>
<reference key="2">
    <citation type="journal article" date="1987" name="J. Biol. Chem.">
        <title>Molecular cloning of five GTP-binding protein cDNA species from rat olfactory neuroepithelium.</title>
        <authorList>
            <person name="Jones D.T."/>
            <person name="Reed R.R."/>
        </authorList>
    </citation>
    <scope>NUCLEOTIDE SEQUENCE [MRNA]</scope>
</reference>
<reference key="3">
    <citation type="journal article" date="2004" name="Genome Res.">
        <title>The status, quality, and expansion of the NIH full-length cDNA project: the Mammalian Gene Collection (MGC).</title>
        <authorList>
            <consortium name="The MGC Project Team"/>
        </authorList>
    </citation>
    <scope>NUCLEOTIDE SEQUENCE [LARGE SCALE MRNA]</scope>
    <source>
        <tissue>Lung</tissue>
    </source>
</reference>
<reference key="4">
    <citation type="journal article" date="1990" name="J. Biol. Chem.">
        <title>Purification and characterization of Go alpha and three types of Gi alpha after expression in Escherichia coli.</title>
        <authorList>
            <person name="Linder M.E."/>
            <person name="Ewald D.A."/>
            <person name="Miller R.J."/>
            <person name="Gilman A.G."/>
        </authorList>
    </citation>
    <scope>PROTEIN SEQUENCE OF 12-126</scope>
</reference>
<reference key="5">
    <citation type="journal article" date="2000" name="Proc. Natl. Acad. Sci. U.S.A.">
        <title>Activator of G protein signaling 3 is a guanine dissociation inhibitor for Galpha i subunits.</title>
        <authorList>
            <person name="de Vries L."/>
            <person name="Fischer T."/>
            <person name="Tronchere H."/>
            <person name="Brothers G.M."/>
            <person name="Strockbine B."/>
            <person name="Siderovski D.P."/>
            <person name="Farquhar M.G."/>
        </authorList>
    </citation>
    <scope>INTERACTION WITH GPSM1</scope>
</reference>
<reference key="6">
    <citation type="journal article" date="2001" name="J. Biol. Chem.">
        <title>RGS12 and RGS14 GoLoco motifs are G alpha(i) interaction sites with guanine nucleotide dissociation inhibitor activity.</title>
        <authorList>
            <person name="Kimple R.J."/>
            <person name="De Vries L."/>
            <person name="Tronchere H."/>
            <person name="Behe C.I."/>
            <person name="Morris R.A."/>
            <person name="Gist Farquhar M."/>
            <person name="Siderovski D.P."/>
        </authorList>
    </citation>
    <scope>INTERACTION WITH RGS12 AND RGS14</scope>
</reference>
<reference key="7">
    <citation type="journal article" date="2007" name="Cell. Signal.">
        <title>Selective interactions between Gi alpha1 and Gi alpha3 and the GoLoco/GPR domain of RGS14 influence its dynamic subcellular localization.</title>
        <authorList>
            <person name="Shu F.J."/>
            <person name="Ramineni S."/>
            <person name="Amyot W."/>
            <person name="Hepler J.R."/>
        </authorList>
    </citation>
    <scope>SUBCELLULAR LOCATION</scope>
</reference>
<reference key="8">
    <citation type="journal article" date="2004" name="J. Biol. Chem.">
        <title>The RGS14 GoLoco domain discriminates among Galphai isoforms.</title>
        <authorList>
            <person name="Mittal V."/>
            <person name="Linder M.E."/>
        </authorList>
    </citation>
    <scope>MUTAGENESIS OF MET-82; VAL-85; LYS-86; ASN-90; GLN-92; ALA-96; PRO-98; GLN-99; SER-111; CYS-112; PRO-121 AND GLU-122</scope>
</reference>
<reference key="9">
    <citation type="journal article" date="2007" name="J. Cell Biol.">
        <title>Localization of Gi alpha proteins in the centrosomes and at the midbody: implication for their role in cell division.</title>
        <authorList>
            <person name="Cho H."/>
            <person name="Kehrl J.H."/>
        </authorList>
    </citation>
    <scope>SUBCELLULAR LOCATION</scope>
</reference>
<reference key="10">
    <citation type="journal article" date="2009" name="Proc. Natl. Acad. Sci. U.S.A.">
        <title>GIV is a nonreceptor GEF for G alpha i with a unique motif that regulates Akt signaling.</title>
        <authorList>
            <person name="Garcia-Marcos M."/>
            <person name="Ghosh P."/>
            <person name="Farquhar M.G."/>
        </authorList>
    </citation>
    <scope>INTERACTION WITH CCDC88A</scope>
</reference>
<reference key="11">
    <citation type="journal article" date="2011" name="J. Biol. Chem.">
        <title>G Protein binding sites on Calnuc (nucleobindin 1) and NUCB2 (nucleobindin 2) define a new class of G(alpha)i-regulatory motifs.</title>
        <authorList>
            <person name="Garcia-Marcos M."/>
            <person name="Kietrsunthorn P.S."/>
            <person name="Wang H."/>
            <person name="Ghosh P."/>
            <person name="Farquhar M.G."/>
        </authorList>
    </citation>
    <scope>INTERACTION WITH NUCB1</scope>
</reference>